<sequence>MRSKKLWISLLFALTLIFTMAFSNMSAQAAGKSSTEKKYIVGFKQTMSAMSSAKKKDVISEKGGKVQKQFKYVNAAAATLDEKAVKELKKDPSVAYVEEDHIAHEYAQSVPYGISQIKAPALHSQGYTGSNVKVAVIDSGIDSSHPDLNVRGGASFVPSETNPYQDGSSHGTHVAGTIAALNNSIGVLGVAPSASLYAVKVLDSTGSGQYSWIINGIEWAISNNMDVINMSLGGPTGSTALKTVVDKAVSSGIVVAAAAGNEGSSGSTSTVGYPAKYPSTIAVGAVNSSNQRASFSSAGSELDVMAPGVSIQSTLPGGTYGAYNGTSMATPHVAGAAALILSKHPTWTNAQVRDRLESTATYLGNSFYYGKGLINVQAAAQ</sequence>
<reference key="1">
    <citation type="journal article" date="1984" name="J. Bacteriol.">
        <title>Replacement of the Bacillus subtilis subtilisin structural gene with an In vitro-derived deletion mutation.</title>
        <authorList>
            <person name="Stahl M.L."/>
            <person name="Ferrari E."/>
        </authorList>
    </citation>
    <scope>NUCLEOTIDE SEQUENCE [GENOMIC DNA]</scope>
    <scope>DISRUPTION PHENOTYPE</scope>
    <source>
        <strain>168 / PY79</strain>
    </source>
</reference>
<reference key="2">
    <citation type="journal article" date="1998" name="Microbiology">
        <title>The 172 kb prkA-addAB region from 83 degrees to 97 degrees of the Bacillus subtilis chromosome contains several dysfunctional genes, the glyB marker, many genes encoding transporter proteins, and the ubiquitous hit gene.</title>
        <authorList>
            <person name="Noback M.A."/>
            <person name="Holsappel S."/>
            <person name="Kiewiet R."/>
            <person name="Terpstra P."/>
            <person name="Wambutt R."/>
            <person name="Wedler H."/>
            <person name="Venema G."/>
            <person name="Bron S."/>
        </authorList>
    </citation>
    <scope>NUCLEOTIDE SEQUENCE [GENOMIC DNA]</scope>
    <source>
        <strain>168</strain>
    </source>
</reference>
<reference key="3">
    <citation type="journal article" date="1997" name="Nature">
        <title>The complete genome sequence of the Gram-positive bacterium Bacillus subtilis.</title>
        <authorList>
            <person name="Kunst F."/>
            <person name="Ogasawara N."/>
            <person name="Moszer I."/>
            <person name="Albertini A.M."/>
            <person name="Alloni G."/>
            <person name="Azevedo V."/>
            <person name="Bertero M.G."/>
            <person name="Bessieres P."/>
            <person name="Bolotin A."/>
            <person name="Borchert S."/>
            <person name="Borriss R."/>
            <person name="Boursier L."/>
            <person name="Brans A."/>
            <person name="Braun M."/>
            <person name="Brignell S.C."/>
            <person name="Bron S."/>
            <person name="Brouillet S."/>
            <person name="Bruschi C.V."/>
            <person name="Caldwell B."/>
            <person name="Capuano V."/>
            <person name="Carter N.M."/>
            <person name="Choi S.-K."/>
            <person name="Codani J.-J."/>
            <person name="Connerton I.F."/>
            <person name="Cummings N.J."/>
            <person name="Daniel R.A."/>
            <person name="Denizot F."/>
            <person name="Devine K.M."/>
            <person name="Duesterhoeft A."/>
            <person name="Ehrlich S.D."/>
            <person name="Emmerson P.T."/>
            <person name="Entian K.-D."/>
            <person name="Errington J."/>
            <person name="Fabret C."/>
            <person name="Ferrari E."/>
            <person name="Foulger D."/>
            <person name="Fritz C."/>
            <person name="Fujita M."/>
            <person name="Fujita Y."/>
            <person name="Fuma S."/>
            <person name="Galizzi A."/>
            <person name="Galleron N."/>
            <person name="Ghim S.-Y."/>
            <person name="Glaser P."/>
            <person name="Goffeau A."/>
            <person name="Golightly E.J."/>
            <person name="Grandi G."/>
            <person name="Guiseppi G."/>
            <person name="Guy B.J."/>
            <person name="Haga K."/>
            <person name="Haiech J."/>
            <person name="Harwood C.R."/>
            <person name="Henaut A."/>
            <person name="Hilbert H."/>
            <person name="Holsappel S."/>
            <person name="Hosono S."/>
            <person name="Hullo M.-F."/>
            <person name="Itaya M."/>
            <person name="Jones L.-M."/>
            <person name="Joris B."/>
            <person name="Karamata D."/>
            <person name="Kasahara Y."/>
            <person name="Klaerr-Blanchard M."/>
            <person name="Klein C."/>
            <person name="Kobayashi Y."/>
            <person name="Koetter P."/>
            <person name="Koningstein G."/>
            <person name="Krogh S."/>
            <person name="Kumano M."/>
            <person name="Kurita K."/>
            <person name="Lapidus A."/>
            <person name="Lardinois S."/>
            <person name="Lauber J."/>
            <person name="Lazarevic V."/>
            <person name="Lee S.-M."/>
            <person name="Levine A."/>
            <person name="Liu H."/>
            <person name="Masuda S."/>
            <person name="Mauel C."/>
            <person name="Medigue C."/>
            <person name="Medina N."/>
            <person name="Mellado R.P."/>
            <person name="Mizuno M."/>
            <person name="Moestl D."/>
            <person name="Nakai S."/>
            <person name="Noback M."/>
            <person name="Noone D."/>
            <person name="O'Reilly M."/>
            <person name="Ogawa K."/>
            <person name="Ogiwara A."/>
            <person name="Oudega B."/>
            <person name="Park S.-H."/>
            <person name="Parro V."/>
            <person name="Pohl T.M."/>
            <person name="Portetelle D."/>
            <person name="Porwollik S."/>
            <person name="Prescott A.M."/>
            <person name="Presecan E."/>
            <person name="Pujic P."/>
            <person name="Purnelle B."/>
            <person name="Rapoport G."/>
            <person name="Rey M."/>
            <person name="Reynolds S."/>
            <person name="Rieger M."/>
            <person name="Rivolta C."/>
            <person name="Rocha E."/>
            <person name="Roche B."/>
            <person name="Rose M."/>
            <person name="Sadaie Y."/>
            <person name="Sato T."/>
            <person name="Scanlan E."/>
            <person name="Schleich S."/>
            <person name="Schroeter R."/>
            <person name="Scoffone F."/>
            <person name="Sekiguchi J."/>
            <person name="Sekowska A."/>
            <person name="Seror S.J."/>
            <person name="Serror P."/>
            <person name="Shin B.-S."/>
            <person name="Soldo B."/>
            <person name="Sorokin A."/>
            <person name="Tacconi E."/>
            <person name="Takagi T."/>
            <person name="Takahashi H."/>
            <person name="Takemaru K."/>
            <person name="Takeuchi M."/>
            <person name="Tamakoshi A."/>
            <person name="Tanaka T."/>
            <person name="Terpstra P."/>
            <person name="Tognoni A."/>
            <person name="Tosato V."/>
            <person name="Uchiyama S."/>
            <person name="Vandenbol M."/>
            <person name="Vannier F."/>
            <person name="Vassarotti A."/>
            <person name="Viari A."/>
            <person name="Wambutt R."/>
            <person name="Wedler E."/>
            <person name="Wedler H."/>
            <person name="Weitzenegger T."/>
            <person name="Winters P."/>
            <person name="Wipat A."/>
            <person name="Yamamoto H."/>
            <person name="Yamane K."/>
            <person name="Yasumoto K."/>
            <person name="Yata K."/>
            <person name="Yoshida K."/>
            <person name="Yoshikawa H.-F."/>
            <person name="Zumstein E."/>
            <person name="Yoshikawa H."/>
            <person name="Danchin A."/>
        </authorList>
    </citation>
    <scope>NUCLEOTIDE SEQUENCE [LARGE SCALE GENOMIC DNA]</scope>
    <source>
        <strain>168</strain>
    </source>
</reference>
<reference key="4">
    <citation type="journal article" date="2009" name="Microbiology">
        <title>From a consortium sequence to a unified sequence: the Bacillus subtilis 168 reference genome a decade later.</title>
        <authorList>
            <person name="Barbe V."/>
            <person name="Cruveiller S."/>
            <person name="Kunst F."/>
            <person name="Lenoble P."/>
            <person name="Meurice G."/>
            <person name="Sekowska A."/>
            <person name="Vallenet D."/>
            <person name="Wang T."/>
            <person name="Moszer I."/>
            <person name="Medigue C."/>
            <person name="Danchin A."/>
        </authorList>
    </citation>
    <scope>SEQUENCE REVISION TO 27 AND 191</scope>
</reference>
<reference key="5">
    <citation type="journal article" date="1984" name="Proc. Natl. Acad. Sci. U.S.A.">
        <title>The subtilisin E gene of Bacillus subtilis is transcribed from a sigma 37 promoter in vivo.</title>
        <authorList>
            <person name="Wong S.L."/>
            <person name="Price C.W."/>
            <person name="Goldfarb D.S."/>
            <person name="Doi R.H."/>
        </authorList>
    </citation>
    <scope>NUCLEOTIDE SEQUENCE [GENOMIC DNA] OF 1-156</scope>
    <scope>INDUCTION</scope>
    <source>
        <strain>168 / PY79</strain>
    </source>
</reference>
<reference key="6">
    <citation type="journal article" date="1987" name="J. Biol. Chem.">
        <title>Requirement of pro-sequence for the production of active subtilisin E in Escherichia coli.</title>
        <authorList>
            <person name="Ikemura H."/>
            <person name="Takagi H."/>
            <person name="Inouye M."/>
        </authorList>
    </citation>
    <scope>NUCLEOTIDE SEQUENCE [GENOMIC DNA] OF 1-156</scope>
    <source>
        <strain>168 / PY79</strain>
    </source>
</reference>
<reference key="7">
    <citation type="journal article" date="1995" name="FEBS Lett.">
        <title>Isolation, characterization and structure of subtilisin from a thermostable Bacillus subtilis isolate.</title>
        <authorList>
            <person name="Kamal M."/>
            <person name="Hoeoeg J.-O."/>
            <person name="Kaiser R."/>
            <person name="Shafqat J."/>
            <person name="Razzaki T."/>
            <person name="Zaidi Z.H."/>
            <person name="Joernvall H."/>
        </authorList>
    </citation>
    <scope>PROTEIN SEQUENCE OF 107-381</scope>
    <scope>NUCLEOTIDE SEQUENCE [GENOMIC DNA] OF 113-323</scope>
    <scope>FUNCTION</scope>
    <scope>CATALYTIC ACTIVITY</scope>
    <scope>ACTIVITY REGULATION</scope>
    <scope>SUBCELLULAR LOCATION</scope>
    <source>
        <strain>RT-5</strain>
    </source>
</reference>
<reference key="8">
    <citation type="journal article" date="1989" name="J. Bacteriol.">
        <title>Bacillus subtilis subtilisin gene (aprE) is expressed from a sigma A (sigma 43) promoter in vitro and in vivo.</title>
        <authorList>
            <person name="Park S.S."/>
            <person name="Wong S.L."/>
            <person name="Wang L.F."/>
            <person name="Doi R.H."/>
        </authorList>
    </citation>
    <scope>NUCLEOTIDE SEQUENCE [GENOMIC DNA] OF 1-13</scope>
    <source>
        <strain>168</strain>
    </source>
</reference>
<reference key="9">
    <citation type="journal article" date="1988" name="J. Bacteriol.">
        <title>Location of the targets of the hpr-97, sacU32(Hy), and sacQ36(Hy) mutations in upstream regions of the subtilisin promoter.</title>
        <authorList>
            <person name="Henner D.J."/>
            <person name="Ferrari E."/>
            <person name="Perego M."/>
            <person name="Hoch J.A."/>
        </authorList>
    </citation>
    <scope>NUCLEOTIDE SEQUENCE [GENOMIC DNA] OF 1-8</scope>
</reference>
<reference key="10">
    <citation type="journal article" date="1986" name="J. Biol. Chem.">
        <title>Determination of the signal peptidase cleavage site in the preprosubtilisin of Bacillus subtilis.</title>
        <authorList>
            <person name="Wong S.L."/>
            <person name="Doi R.H."/>
        </authorList>
    </citation>
    <scope>PROTEIN SEQUENCE OF 30-54</scope>
    <scope>SIGNAL SEQUENCE CLEAVAGE SITE</scope>
    <source>
        <strain>168 / DB104</strain>
    </source>
</reference>
<reference key="11">
    <citation type="journal article" date="1989" name="Nature">
        <title>Pro-sequence of subtilisin can guide the refolding of denatured subtilisin in an intermolecular process.</title>
        <authorList>
            <person name="Zhu X.L."/>
            <person name="Ohta Y."/>
            <person name="Jordan F."/>
            <person name="Inouye M."/>
        </authorList>
    </citation>
    <scope>DOMAIN</scope>
    <scope>MUTAGENESIS OF ASP-138</scope>
</reference>
<reference key="12">
    <citation type="journal article" date="1998" name="J. Mol. Biol.">
        <title>The crystal structure of an autoprocessed Ser221Cys-subtilisin E-propeptide complex at 2.0-A resolution.</title>
        <authorList>
            <person name="Jain S.C."/>
            <person name="Shinde U."/>
            <person name="Li Y."/>
            <person name="Inouye M."/>
            <person name="Berman H.M."/>
        </authorList>
    </citation>
    <scope>X-RAY CRYSTALLOGRAPHY (2.0 ANGSTROMS) OF MUTANT CYS-327 OF MATURE SUBTILISIN IN COMPLEX WITH PROPEPTIDE AND CALCIUM IONS</scope>
    <scope>COFACTOR</scope>
    <source>
        <strain>168</strain>
    </source>
</reference>
<dbReference type="EC" id="3.4.21.62" evidence="7"/>
<dbReference type="EMBL" id="K01988">
    <property type="protein sequence ID" value="AAA22742.1"/>
    <property type="molecule type" value="Genomic_DNA"/>
</dbReference>
<dbReference type="EMBL" id="Y14083">
    <property type="protein sequence ID" value="CAA74536.1"/>
    <property type="molecule type" value="Genomic_DNA"/>
</dbReference>
<dbReference type="EMBL" id="AL009126">
    <property type="protein sequence ID" value="CAB12870.2"/>
    <property type="molecule type" value="Genomic_DNA"/>
</dbReference>
<dbReference type="EMBL" id="K01443">
    <property type="protein sequence ID" value="AAA22814.1"/>
    <property type="molecule type" value="Genomic_DNA"/>
</dbReference>
<dbReference type="EMBL" id="M16639">
    <property type="protein sequence ID" value="AAA22744.1"/>
    <property type="molecule type" value="Genomic_DNA"/>
</dbReference>
<dbReference type="EMBL" id="M31060">
    <property type="protein sequence ID" value="AAA22246.1"/>
    <property type="molecule type" value="Genomic_DNA"/>
</dbReference>
<dbReference type="EMBL" id="M19125">
    <property type="protein sequence ID" value="AAA22245.1"/>
    <property type="molecule type" value="Genomic_DNA"/>
</dbReference>
<dbReference type="PIR" id="A00972">
    <property type="entry name" value="SUBSI"/>
</dbReference>
<dbReference type="RefSeq" id="NP_388911.2">
    <property type="nucleotide sequence ID" value="NC_000964.3"/>
</dbReference>
<dbReference type="RefSeq" id="WP_003233171.1">
    <property type="nucleotide sequence ID" value="NZ_OZ025638.1"/>
</dbReference>
<dbReference type="RefSeq" id="WP_009966941.1">
    <property type="nucleotide sequence ID" value="NZ_CM000487.1"/>
</dbReference>
<dbReference type="PDB" id="1SCJ">
    <property type="method" value="X-ray"/>
    <property type="resolution" value="2.00 A"/>
    <property type="chains" value="A=107-381, B=36-106"/>
</dbReference>
<dbReference type="PDB" id="3WHI">
    <property type="method" value="X-ray"/>
    <property type="resolution" value="2.40 A"/>
    <property type="chains" value="A/B=30-381"/>
</dbReference>
<dbReference type="PDB" id="6O44">
    <property type="method" value="X-ray"/>
    <property type="resolution" value="1.83 A"/>
    <property type="chains" value="A/B=107-381"/>
</dbReference>
<dbReference type="PDB" id="6PAK">
    <property type="method" value="X-ray"/>
    <property type="resolution" value="1.98 A"/>
    <property type="chains" value="A/B=107-381"/>
</dbReference>
<dbReference type="PDBsum" id="1SCJ"/>
<dbReference type="PDBsum" id="3WHI"/>
<dbReference type="PDBsum" id="6O44"/>
<dbReference type="PDBsum" id="6PAK"/>
<dbReference type="BMRB" id="P04189"/>
<dbReference type="SMR" id="P04189"/>
<dbReference type="FunCoup" id="P04189">
    <property type="interactions" value="199"/>
</dbReference>
<dbReference type="STRING" id="224308.BSU10300"/>
<dbReference type="MEROPS" id="I09.001"/>
<dbReference type="MEROPS" id="S08.036"/>
<dbReference type="PaxDb" id="224308-BSU10300"/>
<dbReference type="EnsemblBacteria" id="CAB12870">
    <property type="protein sequence ID" value="CAB12870"/>
    <property type="gene ID" value="BSU_10300"/>
</dbReference>
<dbReference type="GeneID" id="939313"/>
<dbReference type="KEGG" id="bsu:BSU10300"/>
<dbReference type="PATRIC" id="fig|224308.179.peg.1106"/>
<dbReference type="eggNOG" id="COG1404">
    <property type="taxonomic scope" value="Bacteria"/>
</dbReference>
<dbReference type="InParanoid" id="P04189"/>
<dbReference type="OrthoDB" id="9798386at2"/>
<dbReference type="PhylomeDB" id="P04189"/>
<dbReference type="BioCyc" id="BSUB:BSU10300-MONOMER"/>
<dbReference type="BRENDA" id="3.4.21.62">
    <property type="organism ID" value="658"/>
</dbReference>
<dbReference type="SABIO-RK" id="P04189"/>
<dbReference type="EvolutionaryTrace" id="P04189"/>
<dbReference type="Proteomes" id="UP000001570">
    <property type="component" value="Chromosome"/>
</dbReference>
<dbReference type="GO" id="GO:0005576">
    <property type="term" value="C:extracellular region"/>
    <property type="evidence" value="ECO:0007669"/>
    <property type="project" value="UniProtKB-SubCell"/>
</dbReference>
<dbReference type="GO" id="GO:0046872">
    <property type="term" value="F:metal ion binding"/>
    <property type="evidence" value="ECO:0007669"/>
    <property type="project" value="UniProtKB-KW"/>
</dbReference>
<dbReference type="GO" id="GO:0004252">
    <property type="term" value="F:serine-type endopeptidase activity"/>
    <property type="evidence" value="ECO:0007669"/>
    <property type="project" value="UniProtKB-EC"/>
</dbReference>
<dbReference type="GO" id="GO:0006508">
    <property type="term" value="P:proteolysis"/>
    <property type="evidence" value="ECO:0007669"/>
    <property type="project" value="UniProtKB-KW"/>
</dbReference>
<dbReference type="GO" id="GO:0030435">
    <property type="term" value="P:sporulation resulting in formation of a cellular spore"/>
    <property type="evidence" value="ECO:0007669"/>
    <property type="project" value="UniProtKB-KW"/>
</dbReference>
<dbReference type="CDD" id="cd07477">
    <property type="entry name" value="Peptidases_S8_Subtilisin_subset"/>
    <property type="match status" value="1"/>
</dbReference>
<dbReference type="FunFam" id="3.40.50.200:FF:000055">
    <property type="entry name" value="Tk-subtilisin"/>
    <property type="match status" value="1"/>
</dbReference>
<dbReference type="Gene3D" id="3.30.70.80">
    <property type="entry name" value="Peptidase S8 propeptide/proteinase inhibitor I9"/>
    <property type="match status" value="1"/>
</dbReference>
<dbReference type="Gene3D" id="3.40.50.200">
    <property type="entry name" value="Peptidase S8/S53 domain"/>
    <property type="match status" value="1"/>
</dbReference>
<dbReference type="InterPro" id="IPR000209">
    <property type="entry name" value="Peptidase_S8/S53_dom"/>
</dbReference>
<dbReference type="InterPro" id="IPR036852">
    <property type="entry name" value="Peptidase_S8/S53_dom_sf"/>
</dbReference>
<dbReference type="InterPro" id="IPR023827">
    <property type="entry name" value="Peptidase_S8_Asp-AS"/>
</dbReference>
<dbReference type="InterPro" id="IPR022398">
    <property type="entry name" value="Peptidase_S8_His-AS"/>
</dbReference>
<dbReference type="InterPro" id="IPR023828">
    <property type="entry name" value="Peptidase_S8_Ser-AS"/>
</dbReference>
<dbReference type="InterPro" id="IPR050131">
    <property type="entry name" value="Peptidase_S8_subtilisin-like"/>
</dbReference>
<dbReference type="InterPro" id="IPR015500">
    <property type="entry name" value="Peptidase_S8_subtilisin-rel"/>
</dbReference>
<dbReference type="InterPro" id="IPR010259">
    <property type="entry name" value="S8pro/Inhibitor_I9"/>
</dbReference>
<dbReference type="InterPro" id="IPR037045">
    <property type="entry name" value="S8pro/Inhibitor_I9_sf"/>
</dbReference>
<dbReference type="InterPro" id="IPR034202">
    <property type="entry name" value="Subtilisin_Carlsberg-like"/>
</dbReference>
<dbReference type="PANTHER" id="PTHR43806:SF11">
    <property type="entry name" value="CEREVISIN-RELATED"/>
    <property type="match status" value="1"/>
</dbReference>
<dbReference type="PANTHER" id="PTHR43806">
    <property type="entry name" value="PEPTIDASE S8"/>
    <property type="match status" value="1"/>
</dbReference>
<dbReference type="Pfam" id="PF05922">
    <property type="entry name" value="Inhibitor_I9"/>
    <property type="match status" value="1"/>
</dbReference>
<dbReference type="Pfam" id="PF00082">
    <property type="entry name" value="Peptidase_S8"/>
    <property type="match status" value="1"/>
</dbReference>
<dbReference type="PRINTS" id="PR00723">
    <property type="entry name" value="SUBTILISIN"/>
</dbReference>
<dbReference type="SUPFAM" id="SSF54897">
    <property type="entry name" value="Protease propeptides/inhibitors"/>
    <property type="match status" value="1"/>
</dbReference>
<dbReference type="SUPFAM" id="SSF52743">
    <property type="entry name" value="Subtilisin-like"/>
    <property type="match status" value="1"/>
</dbReference>
<dbReference type="PROSITE" id="PS51892">
    <property type="entry name" value="SUBTILASE"/>
    <property type="match status" value="1"/>
</dbReference>
<dbReference type="PROSITE" id="PS00136">
    <property type="entry name" value="SUBTILASE_ASP"/>
    <property type="match status" value="1"/>
</dbReference>
<dbReference type="PROSITE" id="PS00137">
    <property type="entry name" value="SUBTILASE_HIS"/>
    <property type="match status" value="1"/>
</dbReference>
<dbReference type="PROSITE" id="PS00138">
    <property type="entry name" value="SUBTILASE_SER"/>
    <property type="match status" value="1"/>
</dbReference>
<proteinExistence type="evidence at protein level"/>
<feature type="signal peptide" evidence="4">
    <location>
        <begin position="1"/>
        <end position="29"/>
    </location>
</feature>
<feature type="propeptide" id="PRO_0000027187">
    <location>
        <begin position="30"/>
        <end position="106"/>
    </location>
</feature>
<feature type="chain" id="PRO_0000027188" description="Subtilisin E">
    <location>
        <begin position="107"/>
        <end position="381"/>
    </location>
</feature>
<feature type="domain" description="Inhibitor I9" evidence="1">
    <location>
        <begin position="38"/>
        <end position="103"/>
    </location>
</feature>
<feature type="domain" description="Peptidase S8" evidence="2">
    <location>
        <begin position="111"/>
        <end position="380"/>
    </location>
</feature>
<feature type="active site" description="Charge relay system" evidence="2 8">
    <location>
        <position position="138"/>
    </location>
</feature>
<feature type="active site" description="Charge relay system" evidence="2 8">
    <location>
        <position position="170"/>
    </location>
</feature>
<feature type="active site" description="Charge relay system" evidence="2 8">
    <location>
        <position position="327"/>
    </location>
</feature>
<feature type="binding site" evidence="8">
    <location>
        <position position="108"/>
    </location>
    <ligand>
        <name>Ca(2+)</name>
        <dbReference type="ChEBI" id="CHEBI:29108"/>
        <label>1</label>
    </ligand>
</feature>
<feature type="binding site" evidence="8">
    <location>
        <position position="147"/>
    </location>
    <ligand>
        <name>Ca(2+)</name>
        <dbReference type="ChEBI" id="CHEBI:29108"/>
        <label>1</label>
    </ligand>
</feature>
<feature type="binding site" evidence="8">
    <location>
        <position position="181"/>
    </location>
    <ligand>
        <name>Ca(2+)</name>
        <dbReference type="ChEBI" id="CHEBI:29108"/>
        <label>1</label>
    </ligand>
</feature>
<feature type="binding site" evidence="8">
    <location>
        <position position="183"/>
    </location>
    <ligand>
        <name>Ca(2+)</name>
        <dbReference type="ChEBI" id="CHEBI:29108"/>
        <label>1</label>
    </ligand>
</feature>
<feature type="binding site" evidence="8">
    <location>
        <position position="185"/>
    </location>
    <ligand>
        <name>Ca(2+)</name>
        <dbReference type="ChEBI" id="CHEBI:29108"/>
        <label>1</label>
    </ligand>
</feature>
<feature type="binding site" evidence="8">
    <location>
        <position position="187"/>
    </location>
    <ligand>
        <name>Ca(2+)</name>
        <dbReference type="ChEBI" id="CHEBI:29108"/>
        <label>1</label>
    </ligand>
</feature>
<feature type="binding site" evidence="8">
    <location>
        <position position="275"/>
    </location>
    <ligand>
        <name>Ca(2+)</name>
        <dbReference type="ChEBI" id="CHEBI:29108"/>
        <label>2</label>
    </ligand>
</feature>
<feature type="binding site" evidence="8">
    <location>
        <position position="277"/>
    </location>
    <ligand>
        <name>Ca(2+)</name>
        <dbReference type="ChEBI" id="CHEBI:29108"/>
        <label>2</label>
    </ligand>
</feature>
<feature type="binding site" evidence="8">
    <location>
        <position position="280"/>
    </location>
    <ligand>
        <name>Ca(2+)</name>
        <dbReference type="ChEBI" id="CHEBI:29108"/>
        <label>2</label>
    </ligand>
</feature>
<feature type="binding site" evidence="8">
    <location>
        <position position="303"/>
    </location>
    <ligand>
        <name>Ca(2+)</name>
        <dbReference type="ChEBI" id="CHEBI:29108"/>
        <label>2</label>
    </ligand>
</feature>
<feature type="mutagenesis site" description="Prevents intramolecular processing to an active enzyme." evidence="3">
    <original>D</original>
    <variation>N</variation>
    <location>
        <position position="138"/>
    </location>
</feature>
<feature type="sequence conflict" description="In Ref. 2; CAA74536." evidence="11" ref="2">
    <original>A</original>
    <variation>V</variation>
    <location>
        <position position="27"/>
    </location>
</feature>
<feature type="sequence conflict" description="In Ref. 1; AAA22742, 2; CAA74536 and 7; AA sequence." evidence="11" ref="1 2 7">
    <original>A</original>
    <variation>S</variation>
    <location>
        <position position="191"/>
    </location>
</feature>
<feature type="strand" evidence="12">
    <location>
        <begin position="37"/>
        <end position="43"/>
    </location>
</feature>
<feature type="strand" evidence="12">
    <location>
        <begin position="45"/>
        <end position="48"/>
    </location>
</feature>
<feature type="helix" evidence="12">
    <location>
        <begin position="52"/>
        <end position="60"/>
    </location>
</feature>
<feature type="turn" evidence="12">
    <location>
        <begin position="61"/>
        <end position="63"/>
    </location>
</feature>
<feature type="strand" evidence="12">
    <location>
        <begin position="65"/>
        <end position="69"/>
    </location>
</feature>
<feature type="strand" evidence="12">
    <location>
        <begin position="71"/>
        <end position="80"/>
    </location>
</feature>
<feature type="helix" evidence="12">
    <location>
        <begin position="82"/>
        <end position="89"/>
    </location>
</feature>
<feature type="strand" evidence="12">
    <location>
        <begin position="94"/>
        <end position="99"/>
    </location>
</feature>
<feature type="strand" evidence="12">
    <location>
        <begin position="102"/>
        <end position="105"/>
    </location>
</feature>
<feature type="helix" evidence="13">
    <location>
        <begin position="112"/>
        <end position="116"/>
    </location>
</feature>
<feature type="helix" evidence="13">
    <location>
        <begin position="119"/>
        <end position="125"/>
    </location>
</feature>
<feature type="strand" evidence="13">
    <location>
        <begin position="133"/>
        <end position="139"/>
    </location>
</feature>
<feature type="strand" evidence="13">
    <location>
        <begin position="150"/>
        <end position="155"/>
    </location>
</feature>
<feature type="strand" evidence="13">
    <location>
        <begin position="167"/>
        <end position="169"/>
    </location>
</feature>
<feature type="helix" evidence="13">
    <location>
        <begin position="170"/>
        <end position="179"/>
    </location>
</feature>
<feature type="strand" evidence="13">
    <location>
        <begin position="182"/>
        <end position="186"/>
    </location>
</feature>
<feature type="strand" evidence="13">
    <location>
        <begin position="194"/>
        <end position="200"/>
    </location>
</feature>
<feature type="strand" evidence="12">
    <location>
        <begin position="206"/>
        <end position="209"/>
    </location>
</feature>
<feature type="helix" evidence="13">
    <location>
        <begin position="210"/>
        <end position="222"/>
    </location>
</feature>
<feature type="strand" evidence="13">
    <location>
        <begin position="226"/>
        <end position="230"/>
    </location>
</feature>
<feature type="strand" evidence="13">
    <location>
        <begin position="234"/>
        <end position="236"/>
    </location>
</feature>
<feature type="helix" evidence="13">
    <location>
        <begin position="239"/>
        <end position="250"/>
    </location>
</feature>
<feature type="strand" evidence="13">
    <location>
        <begin position="254"/>
        <end position="258"/>
    </location>
</feature>
<feature type="turn" evidence="13">
    <location>
        <begin position="274"/>
        <end position="276"/>
    </location>
</feature>
<feature type="strand" evidence="13">
    <location>
        <begin position="280"/>
        <end position="286"/>
    </location>
</feature>
<feature type="strand" evidence="13">
    <location>
        <begin position="304"/>
        <end position="307"/>
    </location>
</feature>
<feature type="strand" evidence="13">
    <location>
        <begin position="309"/>
        <end position="315"/>
    </location>
</feature>
<feature type="turn" evidence="13">
    <location>
        <begin position="316"/>
        <end position="318"/>
    </location>
</feature>
<feature type="strand" evidence="13">
    <location>
        <begin position="319"/>
        <end position="323"/>
    </location>
</feature>
<feature type="helix" evidence="13">
    <location>
        <begin position="326"/>
        <end position="343"/>
    </location>
</feature>
<feature type="helix" evidence="13">
    <location>
        <begin position="349"/>
        <end position="358"/>
    </location>
</feature>
<feature type="helix" evidence="13">
    <location>
        <begin position="366"/>
        <end position="369"/>
    </location>
</feature>
<feature type="helix" evidence="13">
    <location>
        <begin position="376"/>
        <end position="379"/>
    </location>
</feature>
<protein>
    <recommendedName>
        <fullName>Subtilisin E</fullName>
        <ecNumber evidence="7">3.4.21.62</ecNumber>
    </recommendedName>
</protein>
<gene>
    <name evidence="10" type="primary">aprE</name>
    <name type="synonym">apr</name>
    <name type="synonym">aprA</name>
    <name evidence="9" type="synonym">sprE</name>
    <name type="ordered locus">BSU10300</name>
</gene>
<comment type="function">
    <text evidence="7">An extracellular alkaline serine protease, it catalyzes the hydrolysis of proteins and peptide amides.</text>
</comment>
<comment type="catalytic activity">
    <reaction evidence="7">
        <text>Hydrolysis of proteins with broad specificity for peptide bonds, and a preference for a large uncharged residue in P1. Hydrolyzes peptide amides.</text>
        <dbReference type="EC" id="3.4.21.62"/>
    </reaction>
</comment>
<comment type="cofactor">
    <cofactor evidence="8">
        <name>Ca(2+)</name>
        <dbReference type="ChEBI" id="CHEBI:29108"/>
    </cofactor>
    <text evidence="8">Binds 2 calcium ions per subunit.</text>
</comment>
<comment type="activity regulation">
    <text evidence="7">Inhibited by PMSF (phenylmethylsulphonyl fluoride) and 3,4-dichloroisocoumarin but not by EDTA (shown for strain RT-5) (PubMed:7589571).</text>
</comment>
<comment type="subcellular location">
    <subcellularLocation>
        <location evidence="7">Secreted</location>
    </subcellularLocation>
</comment>
<comment type="induction">
    <text evidence="5">Transcribed only during stationary phase, under control of the sigma-37 factor (sigB) (PubMed:6322190).</text>
</comment>
<comment type="domain">
    <text evidence="3">The propeptide functions as an intramolecular chaperone which is essential for the correct folding of the protease domain but is not required for enzymatic function of the folded protein. It is autoprocessed and degraded after completion of the folding process.</text>
</comment>
<comment type="disruption phenotype">
    <text evidence="6">Wild-type sporulation, cells have only 10% of wild-type serine protease activity (PubMed:6427178).</text>
</comment>
<comment type="miscellaneous">
    <text>Secretion of subtilisin is associated with onset of sporulation, and many mutations which block sporulation at early stages affect expression levels of subtilisin. However, subtilisin is not necessary for normal sporulation.</text>
</comment>
<comment type="similarity">
    <text evidence="11">Belongs to the peptidase S8 family.</text>
</comment>
<accession>P04189</accession>
<accession>O07613</accession>
<accession>P70989</accession>
<evidence type="ECO:0000255" key="1"/>
<evidence type="ECO:0000255" key="2">
    <source>
        <dbReference type="PROSITE-ProRule" id="PRU01240"/>
    </source>
</evidence>
<evidence type="ECO:0000269" key="3">
    <source>
    </source>
</evidence>
<evidence type="ECO:0000269" key="4">
    <source>
    </source>
</evidence>
<evidence type="ECO:0000269" key="5">
    <source>
    </source>
</evidence>
<evidence type="ECO:0000269" key="6">
    <source>
    </source>
</evidence>
<evidence type="ECO:0000269" key="7">
    <source>
    </source>
</evidence>
<evidence type="ECO:0000269" key="8">
    <source>
    </source>
</evidence>
<evidence type="ECO:0000303" key="9">
    <source>
    </source>
</evidence>
<evidence type="ECO:0000303" key="10">
    <source>
    </source>
</evidence>
<evidence type="ECO:0000305" key="11"/>
<evidence type="ECO:0007829" key="12">
    <source>
        <dbReference type="PDB" id="1SCJ"/>
    </source>
</evidence>
<evidence type="ECO:0007829" key="13">
    <source>
        <dbReference type="PDB" id="6O44"/>
    </source>
</evidence>
<name>SUBT_BACSU</name>
<keyword id="KW-0002">3D-structure</keyword>
<keyword id="KW-0068">Autocatalytic cleavage</keyword>
<keyword id="KW-0106">Calcium</keyword>
<keyword id="KW-0903">Direct protein sequencing</keyword>
<keyword id="KW-0378">Hydrolase</keyword>
<keyword id="KW-0479">Metal-binding</keyword>
<keyword id="KW-0645">Protease</keyword>
<keyword id="KW-1185">Reference proteome</keyword>
<keyword id="KW-0964">Secreted</keyword>
<keyword id="KW-0720">Serine protease</keyword>
<keyword id="KW-0732">Signal</keyword>
<keyword id="KW-0749">Sporulation</keyword>
<keyword id="KW-0865">Zymogen</keyword>
<organism>
    <name type="scientific">Bacillus subtilis (strain 168)</name>
    <dbReference type="NCBI Taxonomy" id="224308"/>
    <lineage>
        <taxon>Bacteria</taxon>
        <taxon>Bacillati</taxon>
        <taxon>Bacillota</taxon>
        <taxon>Bacilli</taxon>
        <taxon>Bacillales</taxon>
        <taxon>Bacillaceae</taxon>
        <taxon>Bacillus</taxon>
    </lineage>
</organism>